<accession>Q9SJM4</accession>
<accession>Q6RF62</accession>
<accession>Q6RF63</accession>
<name>STKLI_ARATH</name>
<evidence type="ECO:0000256" key="1">
    <source>
        <dbReference type="SAM" id="MobiDB-lite"/>
    </source>
</evidence>
<evidence type="ECO:0000269" key="2">
    <source>
    </source>
</evidence>
<evidence type="ECO:0000269" key="3">
    <source>
    </source>
</evidence>
<evidence type="ECO:0000269" key="4">
    <source>
    </source>
</evidence>
<evidence type="ECO:0000303" key="5">
    <source>
    </source>
</evidence>
<evidence type="ECO:0000305" key="6"/>
<evidence type="ECO:0000305" key="7">
    <source>
    </source>
</evidence>
<evidence type="ECO:0000312" key="8">
    <source>
        <dbReference type="Araport" id="AT2G36340"/>
    </source>
</evidence>
<evidence type="ECO:0000312" key="9">
    <source>
        <dbReference type="EMBL" id="AAD21432.1"/>
    </source>
</evidence>
<sequence>MVGTKRVADSIDTNSDDTLTRNREVEVEAMLSRRKQLRTTTTRTTTTRTTPLSLSSSASKMNWSKNDELVILGGIVDYENETKLSYRSDWDALYRYIKDCVEAKFSKIQLINKVKNMKRKFTYNQGRSNHGEQLSFTNTDDDEIFKLSLIIWDKNESEYVSNENIDQAKDVPSGEPETNDVPCEEQDDRDVPCEEQERANIEIDNGVREKLDQAKDVPCVEQESEDVPCVEQERVSIEIDNGEKEKLDQTMDCEEQENTDVLCEEKGDKDVPCEEQENKDVPCEEQERVSIEIDNGEEEMSSEEDGVDEVGVMEDTLDSGISFQGLGKNGVKDKSEEDDVVELGVLQEIFKEDTFFQSLGRYQQKLLLQNLENVGVERRKELINEWKALFVDEQRLCVKKLTFAAKLANLGVSP</sequence>
<feature type="chain" id="PRO_0000436983" description="GLABROUS1 enhancer-binding protein-like 3">
    <location>
        <begin position="1"/>
        <end position="414"/>
    </location>
</feature>
<feature type="region of interest" description="Disordered" evidence="1">
    <location>
        <begin position="36"/>
        <end position="57"/>
    </location>
</feature>
<feature type="region of interest" description="Disordered" evidence="1">
    <location>
        <begin position="167"/>
        <end position="191"/>
    </location>
</feature>
<feature type="region of interest" description="Non-canonical leucine-zipper" evidence="7">
    <location>
        <begin position="382"/>
        <end position="403"/>
    </location>
</feature>
<feature type="compositionally biased region" description="Low complexity" evidence="1">
    <location>
        <begin position="38"/>
        <end position="50"/>
    </location>
</feature>
<feature type="splice variant" id="VSP_058466" description="In isoform 2.">
    <original>YVSNENIDQAKDVPSGEPETNDVPCEEQDDRDVPCEE</original>
    <variation>MFLLVSQRLMMCLVRSKTIGMCLVRSKSERISRLIMV</variation>
    <location>
        <begin position="159"/>
        <end position="195"/>
    </location>
</feature>
<feature type="splice variant" id="VSP_058467" description="In isoform 2.">
    <location>
        <begin position="196"/>
        <end position="414"/>
    </location>
</feature>
<keyword id="KW-0025">Alternative splicing</keyword>
<keyword id="KW-0539">Nucleus</keyword>
<keyword id="KW-1185">Reference proteome</keyword>
<keyword id="KW-0804">Transcription</keyword>
<keyword id="KW-0805">Transcription regulation</keyword>
<comment type="function">
    <text evidence="3">Probable transcription factor. Involved in stress responses (PubMed:21875893). Plays a repressive role in cell expansion by counteracting the positive role of CPR5 in this process, but does not regulate cell proliferation or endoreduplication (PubMed:21875893).</text>
</comment>
<comment type="subunit">
    <text evidence="2 4">Homo- and heterodimers. Interacts with GEBP, GPL1 and GPL2. Interacts with GEBP (PubMed:29192025).</text>
</comment>
<comment type="interaction">
    <interactant intactId="EBI-15199331">
        <id>Q9SJM4</id>
    </interactant>
    <interactant intactId="EBI-25523010">
        <id>O82162</id>
        <label>EYA</label>
    </interactant>
    <organismsDiffer>false</organismsDiffer>
    <experiments>3</experiments>
</comment>
<comment type="interaction">
    <interactant intactId="EBI-15199331">
        <id>Q9SJM4</id>
    </interactant>
    <interactant intactId="EBI-15191723">
        <id>Q9ASZ1</id>
        <label>GEBP</label>
    </interactant>
    <organismsDiffer>false</organismsDiffer>
    <experiments>3</experiments>
</comment>
<comment type="interaction">
    <interactant intactId="EBI-15199331">
        <id>Q9SJM4</id>
    </interactant>
    <interactant intactId="EBI-4426914">
        <id>Q8VYD2</id>
        <label>GPL1</label>
    </interactant>
    <organismsDiffer>false</organismsDiffer>
    <experiments>3</experiments>
</comment>
<comment type="interaction">
    <interactant intactId="EBI-15199331">
        <id>Q9SJM4</id>
    </interactant>
    <interactant intactId="EBI-3946677">
        <id>Q9ZSY8</id>
        <label>IAA27</label>
    </interactant>
    <organismsDiffer>false</organismsDiffer>
    <experiments>3</experiments>
</comment>
<comment type="subcellular location">
    <subcellularLocation>
        <location evidence="2">Nucleus</location>
    </subcellularLocation>
</comment>
<comment type="alternative products">
    <event type="alternative splicing"/>
    <isoform>
        <id>Q9SJM4-1</id>
        <name>1</name>
        <sequence type="displayed"/>
    </isoform>
    <isoform>
        <id>Q9SJM4-2</id>
        <name>2</name>
        <sequence type="described" ref="VSP_058466 VSP_058467"/>
    </isoform>
</comment>
<comment type="tissue specificity">
    <text evidence="2">Expressed in the apical meristem and young leaf primordia. Detected in the vascular tissues of rosette leaves, in primary and secondary roots and at the base of flowers and siliques.</text>
</comment>
<comment type="similarity">
    <text evidence="6">Belongs to the GeBP family.</text>
</comment>
<comment type="online information" name="Plant Transcription Factor Database">
    <link uri="https://planttfdb.gao-lab.org/family.php?fam=GeBP#family_intro"/>
</comment>
<reference key="1">
    <citation type="journal article" date="1999" name="Nature">
        <title>Sequence and analysis of chromosome 2 of the plant Arabidopsis thaliana.</title>
        <authorList>
            <person name="Lin X."/>
            <person name="Kaul S."/>
            <person name="Rounsley S.D."/>
            <person name="Shea T.P."/>
            <person name="Benito M.-I."/>
            <person name="Town C.D."/>
            <person name="Fujii C.Y."/>
            <person name="Mason T.M."/>
            <person name="Bowman C.L."/>
            <person name="Barnstead M.E."/>
            <person name="Feldblyum T.V."/>
            <person name="Buell C.R."/>
            <person name="Ketchum K.A."/>
            <person name="Lee J.J."/>
            <person name="Ronning C.M."/>
            <person name="Koo H.L."/>
            <person name="Moffat K.S."/>
            <person name="Cronin L.A."/>
            <person name="Shen M."/>
            <person name="Pai G."/>
            <person name="Van Aken S."/>
            <person name="Umayam L."/>
            <person name="Tallon L.J."/>
            <person name="Gill J.E."/>
            <person name="Adams M.D."/>
            <person name="Carrera A.J."/>
            <person name="Creasy T.H."/>
            <person name="Goodman H.M."/>
            <person name="Somerville C.R."/>
            <person name="Copenhaver G.P."/>
            <person name="Preuss D."/>
            <person name="Nierman W.C."/>
            <person name="White O."/>
            <person name="Eisen J.A."/>
            <person name="Salzberg S.L."/>
            <person name="Fraser C.M."/>
            <person name="Venter J.C."/>
        </authorList>
    </citation>
    <scope>NUCLEOTIDE SEQUENCE [LARGE SCALE GENOMIC DNA]</scope>
    <source>
        <strain>cv. Columbia</strain>
    </source>
</reference>
<reference key="2">
    <citation type="journal article" date="2017" name="Plant J.">
        <title>Araport11: a complete reannotation of the Arabidopsis thaliana reference genome.</title>
        <authorList>
            <person name="Cheng C.Y."/>
            <person name="Krishnakumar V."/>
            <person name="Chan A.P."/>
            <person name="Thibaud-Nissen F."/>
            <person name="Schobel S."/>
            <person name="Town C.D."/>
        </authorList>
    </citation>
    <scope>GENOME REANNOTATION</scope>
    <source>
        <strain>cv. Columbia</strain>
    </source>
</reference>
<reference key="3">
    <citation type="submission" date="2004-10" db="EMBL/GenBank/DDBJ databases">
        <authorList>
            <person name="Underwood B.A."/>
            <person name="Xiao Y.-L."/>
            <person name="Moskal W.A. Jr."/>
            <person name="Monaghan E.L."/>
            <person name="Wang W."/>
            <person name="Redman J.C."/>
            <person name="Wu H.C."/>
            <person name="Utterback T."/>
            <person name="Town C.D."/>
        </authorList>
    </citation>
    <scope>NUCLEOTIDE SEQUENCE [LARGE SCALE MRNA]</scope>
    <source>
        <strain>cv. Columbia</strain>
    </source>
</reference>
<reference key="4">
    <citation type="journal article" date="2005" name="Plant Physiol.">
        <title>Analysis of the cDNAs of hypothetical genes on Arabidopsis chromosome 2 reveals numerous transcript variants.</title>
        <authorList>
            <person name="Xiao Y.-L."/>
            <person name="Smith S.R."/>
            <person name="Ishmael N."/>
            <person name="Redman J.C."/>
            <person name="Kumar N."/>
            <person name="Monaghan E.L."/>
            <person name="Ayele M."/>
            <person name="Haas B.J."/>
            <person name="Wu H.C."/>
            <person name="Town C.D."/>
        </authorList>
    </citation>
    <scope>NUCLEOTIDE SEQUENCE [LARGE SCALE MRNA] (ISOFORMS 1 AND 2)</scope>
    <source>
        <strain>cv. Columbia</strain>
    </source>
</reference>
<reference key="5">
    <citation type="submission" date="2009-03" db="EMBL/GenBank/DDBJ databases">
        <title>ORF cloning and analysis of Arabidopsis transcription factor genes.</title>
        <authorList>
            <person name="Fujita M."/>
            <person name="Mizukado S."/>
            <person name="Seki M."/>
            <person name="Shinozaki K."/>
            <person name="Mitsuda N."/>
            <person name="Takiguchi Y."/>
            <person name="Takagi M."/>
        </authorList>
    </citation>
    <scope>NUCLEOTIDE SEQUENCE [LARGE SCALE MRNA] (ISOFORM 1)</scope>
</reference>
<reference key="6">
    <citation type="journal article" date="2003" name="Plant J.">
        <title>GeBP, the first member of a new gene family in Arabidopsis, encodes a nuclear protein with DNA-binding activity and is regulated by KNAT1.</title>
        <authorList>
            <person name="Curaba J."/>
            <person name="Herzog M."/>
            <person name="Vachon G."/>
        </authorList>
    </citation>
    <scope>GENE FAMILY</scope>
</reference>
<reference key="7">
    <citation type="journal article" date="2008" name="Plant Physiol.">
        <title>GeBP and GeBP-like proteins are noncanonical leucine-zipper transcription factors that regulate cytokinin response in Arabidopsis.</title>
        <authorList>
            <person name="Chevalier F."/>
            <person name="Perazza D."/>
            <person name="Laporte F."/>
            <person name="Le Henanff G."/>
            <person name="Hornitschek P."/>
            <person name="Bonneville J.M."/>
            <person name="Herzog M."/>
            <person name="Vachon G."/>
        </authorList>
    </citation>
    <scope>INTERACTION WITH GEBP; GPL1 AND GPL2</scope>
    <scope>SUBUNIT</scope>
    <scope>SUBCELLULAR LOCATION</scope>
    <scope>TISSUE SPECIFICITY</scope>
</reference>
<reference key="8">
    <citation type="journal article" date="2011" name="Plant Physiol.">
        <title>GeBP/GPL transcription factors regulate a subset of CPR5-dependent processes.</title>
        <authorList>
            <person name="Perazza D."/>
            <person name="Laporte F."/>
            <person name="Balague C."/>
            <person name="Chevalier F."/>
            <person name="Remo S."/>
            <person name="Bourge M."/>
            <person name="Larkin J."/>
            <person name="Herzog M."/>
            <person name="Vachon G."/>
        </authorList>
    </citation>
    <scope>FUNCTION</scope>
</reference>
<reference key="9">
    <citation type="journal article" date="2018" name="Plant Physiol.">
        <title>STOREKEEPER RELATED1/G-element binding protein (STKR1) interacts with protein kinase SnRK1.</title>
        <authorList>
            <person name="Nietzsche M."/>
            <person name="Guerra T."/>
            <person name="Alseekh S."/>
            <person name="Wiermer M."/>
            <person name="Sonnewald S."/>
            <person name="Fernie A.R."/>
            <person name="Boernke F."/>
        </authorList>
    </citation>
    <scope>INTERACTION WITH GEBP</scope>
</reference>
<proteinExistence type="evidence at protein level"/>
<gene>
    <name evidence="5" type="primary">GPL3</name>
    <name evidence="8" type="ordered locus">At2g36340</name>
    <name evidence="9" type="ORF">F2H17.5</name>
</gene>
<dbReference type="EMBL" id="AC006921">
    <property type="protein sequence ID" value="AAD21432.1"/>
    <property type="molecule type" value="Genomic_DNA"/>
</dbReference>
<dbReference type="EMBL" id="CP002685">
    <property type="protein sequence ID" value="AEC09235.1"/>
    <property type="molecule type" value="Genomic_DNA"/>
</dbReference>
<dbReference type="EMBL" id="AY773863">
    <property type="protein sequence ID" value="AAV63892.1"/>
    <property type="molecule type" value="mRNA"/>
</dbReference>
<dbReference type="EMBL" id="AY501338">
    <property type="protein sequence ID" value="AAR99350.2"/>
    <property type="molecule type" value="mRNA"/>
</dbReference>
<dbReference type="EMBL" id="AY501339">
    <property type="protein sequence ID" value="AAR99351.1"/>
    <property type="molecule type" value="mRNA"/>
</dbReference>
<dbReference type="EMBL" id="AB493578">
    <property type="protein sequence ID" value="BAH30416.1"/>
    <property type="molecule type" value="mRNA"/>
</dbReference>
<dbReference type="PIR" id="E84779">
    <property type="entry name" value="E84779"/>
</dbReference>
<dbReference type="RefSeq" id="NP_181175.1">
    <molecule id="Q9SJM4-1"/>
    <property type="nucleotide sequence ID" value="NM_129191.4"/>
</dbReference>
<dbReference type="FunCoup" id="Q9SJM4">
    <property type="interactions" value="7"/>
</dbReference>
<dbReference type="IntAct" id="Q9SJM4">
    <property type="interactions" value="9"/>
</dbReference>
<dbReference type="STRING" id="3702.Q9SJM4"/>
<dbReference type="iPTMnet" id="Q9SJM4"/>
<dbReference type="PaxDb" id="3702-AT2G36340.1"/>
<dbReference type="ProteomicsDB" id="228301">
    <molecule id="Q9SJM4-1"/>
</dbReference>
<dbReference type="EnsemblPlants" id="AT2G36340.1">
    <molecule id="Q9SJM4-1"/>
    <property type="protein sequence ID" value="AT2G36340.1"/>
    <property type="gene ID" value="AT2G36340"/>
</dbReference>
<dbReference type="GeneID" id="818207"/>
<dbReference type="Gramene" id="AT2G36340.1">
    <molecule id="Q9SJM4-1"/>
    <property type="protein sequence ID" value="AT2G36340.1"/>
    <property type="gene ID" value="AT2G36340"/>
</dbReference>
<dbReference type="KEGG" id="ath:AT2G36340"/>
<dbReference type="Araport" id="AT2G36340"/>
<dbReference type="TAIR" id="AT2G36340">
    <property type="gene designation" value="GPL3"/>
</dbReference>
<dbReference type="eggNOG" id="ENOG502R6TU">
    <property type="taxonomic scope" value="Eukaryota"/>
</dbReference>
<dbReference type="HOGENOM" id="CLU_055192_0_0_1"/>
<dbReference type="InParanoid" id="Q9SJM4"/>
<dbReference type="OMA" id="DVPCEEQ"/>
<dbReference type="OrthoDB" id="1885109at2759"/>
<dbReference type="PhylomeDB" id="Q9SJM4"/>
<dbReference type="PRO" id="PR:Q9SJM4"/>
<dbReference type="Proteomes" id="UP000006548">
    <property type="component" value="Chromosome 2"/>
</dbReference>
<dbReference type="ExpressionAtlas" id="Q9SJM4">
    <property type="expression patterns" value="baseline and differential"/>
</dbReference>
<dbReference type="GO" id="GO:0005634">
    <property type="term" value="C:nucleus"/>
    <property type="evidence" value="ECO:0007669"/>
    <property type="project" value="UniProtKB-SubCell"/>
</dbReference>
<dbReference type="GO" id="GO:0006355">
    <property type="term" value="P:regulation of DNA-templated transcription"/>
    <property type="evidence" value="ECO:0000304"/>
    <property type="project" value="TAIR"/>
</dbReference>
<dbReference type="InterPro" id="IPR007592">
    <property type="entry name" value="GEBP"/>
</dbReference>
<dbReference type="InterPro" id="IPR053932">
    <property type="entry name" value="GeBP-like_DBD"/>
</dbReference>
<dbReference type="PANTHER" id="PTHR31662">
    <property type="entry name" value="BNAANNG10740D PROTEIN-RELATED"/>
    <property type="match status" value="1"/>
</dbReference>
<dbReference type="PANTHER" id="PTHR31662:SF49">
    <property type="entry name" value="GLABROUS1 ENHANCER-BINDING PROTEIN-RELATED"/>
    <property type="match status" value="1"/>
</dbReference>
<dbReference type="Pfam" id="PF04504">
    <property type="entry name" value="GeBP-like_DBD"/>
    <property type="match status" value="1"/>
</dbReference>
<organism>
    <name type="scientific">Arabidopsis thaliana</name>
    <name type="common">Mouse-ear cress</name>
    <dbReference type="NCBI Taxonomy" id="3702"/>
    <lineage>
        <taxon>Eukaryota</taxon>
        <taxon>Viridiplantae</taxon>
        <taxon>Streptophyta</taxon>
        <taxon>Embryophyta</taxon>
        <taxon>Tracheophyta</taxon>
        <taxon>Spermatophyta</taxon>
        <taxon>Magnoliopsida</taxon>
        <taxon>eudicotyledons</taxon>
        <taxon>Gunneridae</taxon>
        <taxon>Pentapetalae</taxon>
        <taxon>rosids</taxon>
        <taxon>malvids</taxon>
        <taxon>Brassicales</taxon>
        <taxon>Brassicaceae</taxon>
        <taxon>Camelineae</taxon>
        <taxon>Arabidopsis</taxon>
    </lineage>
</organism>
<protein>
    <recommendedName>
        <fullName evidence="5">GLABROUS1 enhancer-binding protein-like 3</fullName>
    </recommendedName>
    <alternativeName>
        <fullName evidence="5">Protein GPL3</fullName>
    </alternativeName>
    <alternativeName>
        <fullName evidence="6">Storekeeper-like protein At2g36340</fullName>
    </alternativeName>
</protein>